<name>IHFA_MARMS</name>
<reference key="1">
    <citation type="submission" date="2007-06" db="EMBL/GenBank/DDBJ databases">
        <title>Complete sequence of Marinomonas sp. MWYL1.</title>
        <authorList>
            <consortium name="US DOE Joint Genome Institute"/>
            <person name="Copeland A."/>
            <person name="Lucas S."/>
            <person name="Lapidus A."/>
            <person name="Barry K."/>
            <person name="Glavina del Rio T."/>
            <person name="Dalin E."/>
            <person name="Tice H."/>
            <person name="Pitluck S."/>
            <person name="Kiss H."/>
            <person name="Brettin T."/>
            <person name="Bruce D."/>
            <person name="Detter J.C."/>
            <person name="Han C."/>
            <person name="Schmutz J."/>
            <person name="Larimer F."/>
            <person name="Land M."/>
            <person name="Hauser L."/>
            <person name="Kyrpides N."/>
            <person name="Kim E."/>
            <person name="Johnston A.W.B."/>
            <person name="Todd J.D."/>
            <person name="Rogers R."/>
            <person name="Wexler M."/>
            <person name="Bond P.L."/>
            <person name="Li Y."/>
            <person name="Richardson P."/>
        </authorList>
    </citation>
    <scope>NUCLEOTIDE SEQUENCE [LARGE SCALE GENOMIC DNA]</scope>
    <source>
        <strain>MWYL1</strain>
    </source>
</reference>
<organism>
    <name type="scientific">Marinomonas sp. (strain MWYL1)</name>
    <dbReference type="NCBI Taxonomy" id="400668"/>
    <lineage>
        <taxon>Bacteria</taxon>
        <taxon>Pseudomonadati</taxon>
        <taxon>Pseudomonadota</taxon>
        <taxon>Gammaproteobacteria</taxon>
        <taxon>Oceanospirillales</taxon>
        <taxon>Oceanospirillaceae</taxon>
        <taxon>Marinomonas</taxon>
    </lineage>
</organism>
<comment type="function">
    <text evidence="1">This protein is one of the two subunits of integration host factor, a specific DNA-binding protein that functions in genetic recombination as well as in transcriptional and translational control.</text>
</comment>
<comment type="subunit">
    <text evidence="1">Heterodimer of an alpha and a beta chain.</text>
</comment>
<comment type="similarity">
    <text evidence="1">Belongs to the bacterial histone-like protein family.</text>
</comment>
<feature type="chain" id="PRO_1000122145" description="Integration host factor subunit alpha">
    <location>
        <begin position="1"/>
        <end position="98"/>
    </location>
</feature>
<evidence type="ECO:0000255" key="1">
    <source>
        <dbReference type="HAMAP-Rule" id="MF_00380"/>
    </source>
</evidence>
<accession>A6VYH5</accession>
<sequence length="98" mass="10972">MGSLTKADLAENLVDSIGLSKKDAKDLVEGFFDVVRSSLIERQQVKLSGFGNFEVREKSQRPGRNPKTGEEIPITARTVVTFRPGQKLKSKVEDYMQE</sequence>
<gene>
    <name evidence="1" type="primary">ihfA</name>
    <name evidence="1" type="synonym">himA</name>
    <name type="ordered locus">Mmwyl1_2591</name>
</gene>
<dbReference type="EMBL" id="CP000749">
    <property type="protein sequence ID" value="ABR71504.1"/>
    <property type="molecule type" value="Genomic_DNA"/>
</dbReference>
<dbReference type="SMR" id="A6VYH5"/>
<dbReference type="STRING" id="400668.Mmwyl1_2591"/>
<dbReference type="KEGG" id="mmw:Mmwyl1_2591"/>
<dbReference type="eggNOG" id="COG0776">
    <property type="taxonomic scope" value="Bacteria"/>
</dbReference>
<dbReference type="HOGENOM" id="CLU_105066_1_3_6"/>
<dbReference type="OrthoDB" id="9797747at2"/>
<dbReference type="GO" id="GO:0005829">
    <property type="term" value="C:cytosol"/>
    <property type="evidence" value="ECO:0007669"/>
    <property type="project" value="TreeGrafter"/>
</dbReference>
<dbReference type="GO" id="GO:0003677">
    <property type="term" value="F:DNA binding"/>
    <property type="evidence" value="ECO:0007669"/>
    <property type="project" value="UniProtKB-UniRule"/>
</dbReference>
<dbReference type="GO" id="GO:0030527">
    <property type="term" value="F:structural constituent of chromatin"/>
    <property type="evidence" value="ECO:0007669"/>
    <property type="project" value="InterPro"/>
</dbReference>
<dbReference type="GO" id="GO:0006310">
    <property type="term" value="P:DNA recombination"/>
    <property type="evidence" value="ECO:0007669"/>
    <property type="project" value="UniProtKB-UniRule"/>
</dbReference>
<dbReference type="GO" id="GO:0009893">
    <property type="term" value="P:positive regulation of metabolic process"/>
    <property type="evidence" value="ECO:0007669"/>
    <property type="project" value="UniProtKB-ARBA"/>
</dbReference>
<dbReference type="GO" id="GO:0006355">
    <property type="term" value="P:regulation of DNA-templated transcription"/>
    <property type="evidence" value="ECO:0007669"/>
    <property type="project" value="UniProtKB-UniRule"/>
</dbReference>
<dbReference type="GO" id="GO:0006417">
    <property type="term" value="P:regulation of translation"/>
    <property type="evidence" value="ECO:0007669"/>
    <property type="project" value="UniProtKB-UniRule"/>
</dbReference>
<dbReference type="CDD" id="cd13835">
    <property type="entry name" value="IHF_A"/>
    <property type="match status" value="1"/>
</dbReference>
<dbReference type="FunFam" id="4.10.520.10:FF:000002">
    <property type="entry name" value="Integration host factor subunit alpha"/>
    <property type="match status" value="1"/>
</dbReference>
<dbReference type="Gene3D" id="4.10.520.10">
    <property type="entry name" value="IHF-like DNA-binding proteins"/>
    <property type="match status" value="1"/>
</dbReference>
<dbReference type="HAMAP" id="MF_00380">
    <property type="entry name" value="IHF_alpha"/>
    <property type="match status" value="1"/>
</dbReference>
<dbReference type="InterPro" id="IPR000119">
    <property type="entry name" value="Hist_DNA-bd"/>
</dbReference>
<dbReference type="InterPro" id="IPR020816">
    <property type="entry name" value="Histone-like_DNA-bd_CS"/>
</dbReference>
<dbReference type="InterPro" id="IPR010992">
    <property type="entry name" value="IHF-like_DNA-bd_dom_sf"/>
</dbReference>
<dbReference type="InterPro" id="IPR005684">
    <property type="entry name" value="IHF_alpha"/>
</dbReference>
<dbReference type="NCBIfam" id="TIGR00987">
    <property type="entry name" value="himA"/>
    <property type="match status" value="1"/>
</dbReference>
<dbReference type="NCBIfam" id="NF001401">
    <property type="entry name" value="PRK00285.1"/>
    <property type="match status" value="1"/>
</dbReference>
<dbReference type="PANTHER" id="PTHR33175">
    <property type="entry name" value="DNA-BINDING PROTEIN HU"/>
    <property type="match status" value="1"/>
</dbReference>
<dbReference type="PANTHER" id="PTHR33175:SF2">
    <property type="entry name" value="INTEGRATION HOST FACTOR SUBUNIT ALPHA"/>
    <property type="match status" value="1"/>
</dbReference>
<dbReference type="Pfam" id="PF00216">
    <property type="entry name" value="Bac_DNA_binding"/>
    <property type="match status" value="1"/>
</dbReference>
<dbReference type="PRINTS" id="PR01727">
    <property type="entry name" value="DNABINDINGHU"/>
</dbReference>
<dbReference type="SMART" id="SM00411">
    <property type="entry name" value="BHL"/>
    <property type="match status" value="1"/>
</dbReference>
<dbReference type="SUPFAM" id="SSF47729">
    <property type="entry name" value="IHF-like DNA-binding proteins"/>
    <property type="match status" value="1"/>
</dbReference>
<dbReference type="PROSITE" id="PS00045">
    <property type="entry name" value="HISTONE_LIKE"/>
    <property type="match status" value="1"/>
</dbReference>
<keyword id="KW-0233">DNA recombination</keyword>
<keyword id="KW-0238">DNA-binding</keyword>
<keyword id="KW-0804">Transcription</keyword>
<keyword id="KW-0805">Transcription regulation</keyword>
<keyword id="KW-0810">Translation regulation</keyword>
<protein>
    <recommendedName>
        <fullName evidence="1">Integration host factor subunit alpha</fullName>
        <shortName evidence="1">IHF-alpha</shortName>
    </recommendedName>
</protein>
<proteinExistence type="inferred from homology"/>